<gene>
    <name evidence="1" type="primary">ybeY</name>
    <name type="ordered locus">BQ02120</name>
</gene>
<reference key="1">
    <citation type="journal article" date="2004" name="Proc. Natl. Acad. Sci. U.S.A.">
        <title>The louse-borne human pathogen Bartonella quintana is a genomic derivative of the zoonotic agent Bartonella henselae.</title>
        <authorList>
            <person name="Alsmark U.C.M."/>
            <person name="Frank A.C."/>
            <person name="Karlberg E.O."/>
            <person name="Legault B.-A."/>
            <person name="Ardell D.H."/>
            <person name="Canbaeck B."/>
            <person name="Eriksson A.-S."/>
            <person name="Naeslund A.K."/>
            <person name="Handley S.A."/>
            <person name="Huvet M."/>
            <person name="La Scola B."/>
            <person name="Holmberg M."/>
            <person name="Andersson S.G.E."/>
        </authorList>
    </citation>
    <scope>NUCLEOTIDE SEQUENCE [LARGE SCALE GENOMIC DNA]</scope>
    <source>
        <strain>Toulouse</strain>
    </source>
</reference>
<keyword id="KW-0963">Cytoplasm</keyword>
<keyword id="KW-0255">Endonuclease</keyword>
<keyword id="KW-0378">Hydrolase</keyword>
<keyword id="KW-0479">Metal-binding</keyword>
<keyword id="KW-0540">Nuclease</keyword>
<keyword id="KW-0690">Ribosome biogenesis</keyword>
<keyword id="KW-0698">rRNA processing</keyword>
<keyword id="KW-0862">Zinc</keyword>
<feature type="chain" id="PRO_0000102414" description="Endoribonuclease YbeY">
    <location>
        <begin position="1"/>
        <end position="158"/>
    </location>
</feature>
<feature type="binding site" evidence="1">
    <location>
        <position position="118"/>
    </location>
    <ligand>
        <name>Zn(2+)</name>
        <dbReference type="ChEBI" id="CHEBI:29105"/>
        <note>catalytic</note>
    </ligand>
</feature>
<feature type="binding site" evidence="1">
    <location>
        <position position="122"/>
    </location>
    <ligand>
        <name>Zn(2+)</name>
        <dbReference type="ChEBI" id="CHEBI:29105"/>
        <note>catalytic</note>
    </ligand>
</feature>
<feature type="binding site" evidence="1">
    <location>
        <position position="128"/>
    </location>
    <ligand>
        <name>Zn(2+)</name>
        <dbReference type="ChEBI" id="CHEBI:29105"/>
        <note>catalytic</note>
    </ligand>
</feature>
<protein>
    <recommendedName>
        <fullName evidence="1">Endoribonuclease YbeY</fullName>
        <ecNumber evidence="1">3.1.-.-</ecNumber>
    </recommendedName>
</protein>
<proteinExistence type="inferred from homology"/>
<organism>
    <name type="scientific">Bartonella quintana (strain Toulouse)</name>
    <name type="common">Rochalimaea quintana</name>
    <dbReference type="NCBI Taxonomy" id="283165"/>
    <lineage>
        <taxon>Bacteria</taxon>
        <taxon>Pseudomonadati</taxon>
        <taxon>Pseudomonadota</taxon>
        <taxon>Alphaproteobacteria</taxon>
        <taxon>Hyphomicrobiales</taxon>
        <taxon>Bartonellaceae</taxon>
        <taxon>Bartonella</taxon>
    </lineage>
</organism>
<evidence type="ECO:0000255" key="1">
    <source>
        <dbReference type="HAMAP-Rule" id="MF_00009"/>
    </source>
</evidence>
<dbReference type="EC" id="3.1.-.-" evidence="1"/>
<dbReference type="EMBL" id="BX897700">
    <property type="protein sequence ID" value="CAF25715.1"/>
    <property type="molecule type" value="Genomic_DNA"/>
</dbReference>
<dbReference type="RefSeq" id="WP_011179030.1">
    <property type="nucleotide sequence ID" value="NC_005955.1"/>
</dbReference>
<dbReference type="SMR" id="Q6G0N3"/>
<dbReference type="KEGG" id="bqu:BQ02120"/>
<dbReference type="eggNOG" id="COG0319">
    <property type="taxonomic scope" value="Bacteria"/>
</dbReference>
<dbReference type="HOGENOM" id="CLU_106710_0_0_5"/>
<dbReference type="OrthoDB" id="9807740at2"/>
<dbReference type="Proteomes" id="UP000000597">
    <property type="component" value="Chromosome"/>
</dbReference>
<dbReference type="GO" id="GO:0005737">
    <property type="term" value="C:cytoplasm"/>
    <property type="evidence" value="ECO:0007669"/>
    <property type="project" value="UniProtKB-SubCell"/>
</dbReference>
<dbReference type="GO" id="GO:0004222">
    <property type="term" value="F:metalloendopeptidase activity"/>
    <property type="evidence" value="ECO:0007669"/>
    <property type="project" value="InterPro"/>
</dbReference>
<dbReference type="GO" id="GO:0004521">
    <property type="term" value="F:RNA endonuclease activity"/>
    <property type="evidence" value="ECO:0007669"/>
    <property type="project" value="UniProtKB-UniRule"/>
</dbReference>
<dbReference type="GO" id="GO:0008270">
    <property type="term" value="F:zinc ion binding"/>
    <property type="evidence" value="ECO:0007669"/>
    <property type="project" value="UniProtKB-UniRule"/>
</dbReference>
<dbReference type="GO" id="GO:0006364">
    <property type="term" value="P:rRNA processing"/>
    <property type="evidence" value="ECO:0007669"/>
    <property type="project" value="UniProtKB-UniRule"/>
</dbReference>
<dbReference type="Gene3D" id="3.40.390.30">
    <property type="entry name" value="Metalloproteases ('zincins'), catalytic domain"/>
    <property type="match status" value="1"/>
</dbReference>
<dbReference type="HAMAP" id="MF_00009">
    <property type="entry name" value="Endoribonucl_YbeY"/>
    <property type="match status" value="1"/>
</dbReference>
<dbReference type="InterPro" id="IPR023091">
    <property type="entry name" value="MetalPrtase_cat_dom_sf_prd"/>
</dbReference>
<dbReference type="InterPro" id="IPR002036">
    <property type="entry name" value="YbeY"/>
</dbReference>
<dbReference type="InterPro" id="IPR020549">
    <property type="entry name" value="YbeY_CS"/>
</dbReference>
<dbReference type="NCBIfam" id="TIGR00043">
    <property type="entry name" value="rRNA maturation RNase YbeY"/>
    <property type="match status" value="1"/>
</dbReference>
<dbReference type="PANTHER" id="PTHR46986">
    <property type="entry name" value="ENDORIBONUCLEASE YBEY, CHLOROPLASTIC"/>
    <property type="match status" value="1"/>
</dbReference>
<dbReference type="PANTHER" id="PTHR46986:SF1">
    <property type="entry name" value="ENDORIBONUCLEASE YBEY, CHLOROPLASTIC"/>
    <property type="match status" value="1"/>
</dbReference>
<dbReference type="Pfam" id="PF02130">
    <property type="entry name" value="YbeY"/>
    <property type="match status" value="1"/>
</dbReference>
<dbReference type="SUPFAM" id="SSF55486">
    <property type="entry name" value="Metalloproteases ('zincins'), catalytic domain"/>
    <property type="match status" value="1"/>
</dbReference>
<dbReference type="PROSITE" id="PS01306">
    <property type="entry name" value="UPF0054"/>
    <property type="match status" value="1"/>
</dbReference>
<comment type="function">
    <text evidence="1">Single strand-specific metallo-endoribonuclease involved in late-stage 70S ribosome quality control and in maturation of the 3' terminus of the 16S rRNA.</text>
</comment>
<comment type="cofactor">
    <cofactor evidence="1">
        <name>Zn(2+)</name>
        <dbReference type="ChEBI" id="CHEBI:29105"/>
    </cofactor>
    <text evidence="1">Binds 1 zinc ion.</text>
</comment>
<comment type="subcellular location">
    <subcellularLocation>
        <location evidence="1">Cytoplasm</location>
    </subcellularLocation>
</comment>
<comment type="similarity">
    <text evidence="1">Belongs to the endoribonuclease YbeY family.</text>
</comment>
<name>YBEY_BARQU</name>
<accession>Q6G0N3</accession>
<sequence>MITIDITVESARWNNEKMLYDITEKALKTTMNHLSLENVVSEISLLFTDDKHMAQINAQWRNKNKSTNVLSFPALPLKAGDPPGLMLGDIIIAQETVVLEAKKEGKSFQDHLTHMIVHGILHLLGYNHETNDEACQMEELEREILLKLSINDPYAELS</sequence>